<keyword id="KW-0143">Chaperone</keyword>
<keyword id="KW-0963">Cytoplasm</keyword>
<keyword id="KW-1015">Disulfide bond</keyword>
<keyword id="KW-0676">Redox-active center</keyword>
<keyword id="KW-0346">Stress response</keyword>
<keyword id="KW-0862">Zinc</keyword>
<evidence type="ECO:0000255" key="1">
    <source>
        <dbReference type="HAMAP-Rule" id="MF_00117"/>
    </source>
</evidence>
<organism>
    <name type="scientific">Streptococcus suis (strain 98HAH33)</name>
    <dbReference type="NCBI Taxonomy" id="391296"/>
    <lineage>
        <taxon>Bacteria</taxon>
        <taxon>Bacillati</taxon>
        <taxon>Bacillota</taxon>
        <taxon>Bacilli</taxon>
        <taxon>Lactobacillales</taxon>
        <taxon>Streptococcaceae</taxon>
        <taxon>Streptococcus</taxon>
    </lineage>
</organism>
<dbReference type="EMBL" id="CP000408">
    <property type="protein sequence ID" value="ABP93132.1"/>
    <property type="molecule type" value="Genomic_DNA"/>
</dbReference>
<dbReference type="SMR" id="A4W443"/>
<dbReference type="KEGG" id="ssv:SSU98_1974"/>
<dbReference type="HOGENOM" id="CLU_054493_1_0_9"/>
<dbReference type="GO" id="GO:0005737">
    <property type="term" value="C:cytoplasm"/>
    <property type="evidence" value="ECO:0007669"/>
    <property type="project" value="UniProtKB-SubCell"/>
</dbReference>
<dbReference type="GO" id="GO:0044183">
    <property type="term" value="F:protein folding chaperone"/>
    <property type="evidence" value="ECO:0007669"/>
    <property type="project" value="TreeGrafter"/>
</dbReference>
<dbReference type="GO" id="GO:0051082">
    <property type="term" value="F:unfolded protein binding"/>
    <property type="evidence" value="ECO:0007669"/>
    <property type="project" value="UniProtKB-UniRule"/>
</dbReference>
<dbReference type="GO" id="GO:0042026">
    <property type="term" value="P:protein refolding"/>
    <property type="evidence" value="ECO:0007669"/>
    <property type="project" value="TreeGrafter"/>
</dbReference>
<dbReference type="CDD" id="cd00498">
    <property type="entry name" value="Hsp33"/>
    <property type="match status" value="1"/>
</dbReference>
<dbReference type="Gene3D" id="3.55.30.10">
    <property type="entry name" value="Hsp33 domain"/>
    <property type="match status" value="1"/>
</dbReference>
<dbReference type="Gene3D" id="3.90.1280.10">
    <property type="entry name" value="HSP33 redox switch-like"/>
    <property type="match status" value="1"/>
</dbReference>
<dbReference type="HAMAP" id="MF_00117">
    <property type="entry name" value="HslO"/>
    <property type="match status" value="1"/>
</dbReference>
<dbReference type="InterPro" id="IPR000397">
    <property type="entry name" value="Heat_shock_Hsp33"/>
</dbReference>
<dbReference type="InterPro" id="IPR016154">
    <property type="entry name" value="Heat_shock_Hsp33_C"/>
</dbReference>
<dbReference type="InterPro" id="IPR016153">
    <property type="entry name" value="Heat_shock_Hsp33_N"/>
</dbReference>
<dbReference type="NCBIfam" id="NF001033">
    <property type="entry name" value="PRK00114.1"/>
    <property type="match status" value="1"/>
</dbReference>
<dbReference type="PANTHER" id="PTHR30111">
    <property type="entry name" value="33 KDA CHAPERONIN"/>
    <property type="match status" value="1"/>
</dbReference>
<dbReference type="PANTHER" id="PTHR30111:SF1">
    <property type="entry name" value="33 KDA CHAPERONIN"/>
    <property type="match status" value="1"/>
</dbReference>
<dbReference type="Pfam" id="PF01430">
    <property type="entry name" value="HSP33"/>
    <property type="match status" value="1"/>
</dbReference>
<dbReference type="PIRSF" id="PIRSF005261">
    <property type="entry name" value="Heat_shock_Hsp33"/>
    <property type="match status" value="1"/>
</dbReference>
<dbReference type="SUPFAM" id="SSF64397">
    <property type="entry name" value="Hsp33 domain"/>
    <property type="match status" value="1"/>
</dbReference>
<dbReference type="SUPFAM" id="SSF118352">
    <property type="entry name" value="HSP33 redox switch-like"/>
    <property type="match status" value="1"/>
</dbReference>
<accession>A4W443</accession>
<name>HSLO_STRS2</name>
<protein>
    <recommendedName>
        <fullName evidence="1">33 kDa chaperonin</fullName>
    </recommendedName>
    <alternativeName>
        <fullName evidence="1">Heat shock protein 33 homolog</fullName>
        <shortName evidence="1">HSP33</shortName>
    </alternativeName>
</protein>
<proteinExistence type="inferred from homology"/>
<feature type="chain" id="PRO_1000015583" description="33 kDa chaperonin">
    <location>
        <begin position="1"/>
        <end position="288"/>
    </location>
</feature>
<feature type="disulfide bond" description="Redox-active" evidence="1">
    <location>
        <begin position="235"/>
        <end position="237"/>
    </location>
</feature>
<feature type="disulfide bond" description="Redox-active" evidence="1">
    <location>
        <begin position="268"/>
        <end position="271"/>
    </location>
</feature>
<comment type="function">
    <text evidence="1">Redox regulated molecular chaperone. Protects both thermally unfolding and oxidatively damaged proteins from irreversible aggregation. Plays an important role in the bacterial defense system toward oxidative stress.</text>
</comment>
<comment type="subcellular location">
    <subcellularLocation>
        <location evidence="1">Cytoplasm</location>
    </subcellularLocation>
</comment>
<comment type="PTM">
    <text evidence="1">Under oxidizing conditions two disulfide bonds are formed involving the reactive cysteines. Under reducing conditions zinc is bound to the reactive cysteines and the protein is inactive.</text>
</comment>
<comment type="similarity">
    <text evidence="1">Belongs to the HSP33 family.</text>
</comment>
<sequence length="288" mass="31382">MDKIIKTLSKSGHFRAFVLDSTETVKTAQEKHDTMASSTVALGRTLIANQILAVNEKGDTKITLKILASGAVGAIISVANTKGQVKGYIQNPDLDYKRTATGEVIVGPLVGNGQFLVITDYGTGHPYNSMTPLISGEIGEDFAYFLTDSQQTPSAVGLNVLLDEEDKVKVAGGFLLQVLPGATEVEIARFEKRIQEMPAISSLLASENHIEALLSAIYGDDDFKRLSEEEIGFVCDCSKDRFLDALASLPKADLQEMKEEDKGVDITCQFCQTHYHFDENDLEELING</sequence>
<gene>
    <name evidence="1" type="primary">hslO</name>
    <name type="ordered locus">SSU98_1974</name>
</gene>
<reference key="1">
    <citation type="journal article" date="2007" name="PLoS ONE">
        <title>A glimpse of streptococcal toxic shock syndrome from comparative genomics of S. suis 2 Chinese isolates.</title>
        <authorList>
            <person name="Chen C."/>
            <person name="Tang J."/>
            <person name="Dong W."/>
            <person name="Wang C."/>
            <person name="Feng Y."/>
            <person name="Wang J."/>
            <person name="Zheng F."/>
            <person name="Pan X."/>
            <person name="Liu D."/>
            <person name="Li M."/>
            <person name="Song Y."/>
            <person name="Zhu X."/>
            <person name="Sun H."/>
            <person name="Feng T."/>
            <person name="Guo Z."/>
            <person name="Ju A."/>
            <person name="Ge J."/>
            <person name="Dong Y."/>
            <person name="Sun W."/>
            <person name="Jiang Y."/>
            <person name="Wang J."/>
            <person name="Yan J."/>
            <person name="Yang H."/>
            <person name="Wang X."/>
            <person name="Gao G.F."/>
            <person name="Yang R."/>
            <person name="Wang J."/>
            <person name="Yu J."/>
        </authorList>
    </citation>
    <scope>NUCLEOTIDE SEQUENCE [LARGE SCALE GENOMIC DNA]</scope>
    <source>
        <strain>98HAH33</strain>
    </source>
</reference>